<organism>
    <name type="scientific">Pseudechis australis</name>
    <name type="common">Mulga snake</name>
    <name type="synonym">King brown snake</name>
    <dbReference type="NCBI Taxonomy" id="8670"/>
    <lineage>
        <taxon>Eukaryota</taxon>
        <taxon>Metazoa</taxon>
        <taxon>Chordata</taxon>
        <taxon>Craniata</taxon>
        <taxon>Vertebrata</taxon>
        <taxon>Euteleostomi</taxon>
        <taxon>Lepidosauria</taxon>
        <taxon>Squamata</taxon>
        <taxon>Bifurcata</taxon>
        <taxon>Unidentata</taxon>
        <taxon>Episquamata</taxon>
        <taxon>Toxicofera</taxon>
        <taxon>Serpentes</taxon>
        <taxon>Colubroidea</taxon>
        <taxon>Elapidae</taxon>
        <taxon>Hydrophiinae</taxon>
        <taxon>Pseudechis</taxon>
    </lineage>
</organism>
<keyword id="KW-1015">Disulfide bond</keyword>
<keyword id="KW-0646">Protease inhibitor</keyword>
<keyword id="KW-0964">Secreted</keyword>
<keyword id="KW-0722">Serine protease inhibitor</keyword>
<keyword id="KW-0732">Signal</keyword>
<keyword id="KW-0800">Toxin</keyword>
<dbReference type="EMBL" id="AY626925">
    <property type="protein sequence ID" value="AAT45401.1"/>
    <property type="molecule type" value="mRNA"/>
</dbReference>
<dbReference type="SMR" id="Q6ITC0"/>
<dbReference type="MEROPS" id="I02.052"/>
<dbReference type="GO" id="GO:0005576">
    <property type="term" value="C:extracellular region"/>
    <property type="evidence" value="ECO:0007669"/>
    <property type="project" value="UniProtKB-SubCell"/>
</dbReference>
<dbReference type="GO" id="GO:0004867">
    <property type="term" value="F:serine-type endopeptidase inhibitor activity"/>
    <property type="evidence" value="ECO:0007669"/>
    <property type="project" value="UniProtKB-KW"/>
</dbReference>
<dbReference type="GO" id="GO:0090729">
    <property type="term" value="F:toxin activity"/>
    <property type="evidence" value="ECO:0007669"/>
    <property type="project" value="UniProtKB-KW"/>
</dbReference>
<dbReference type="CDD" id="cd22594">
    <property type="entry name" value="Kunitz_textilinin-like"/>
    <property type="match status" value="1"/>
</dbReference>
<dbReference type="FunFam" id="4.10.410.10:FF:000021">
    <property type="entry name" value="Serine protease inhibitor, putative"/>
    <property type="match status" value="1"/>
</dbReference>
<dbReference type="Gene3D" id="4.10.410.10">
    <property type="entry name" value="Pancreatic trypsin inhibitor Kunitz domain"/>
    <property type="match status" value="1"/>
</dbReference>
<dbReference type="InterPro" id="IPR002223">
    <property type="entry name" value="Kunitz_BPTI"/>
</dbReference>
<dbReference type="InterPro" id="IPR036880">
    <property type="entry name" value="Kunitz_BPTI_sf"/>
</dbReference>
<dbReference type="InterPro" id="IPR020901">
    <property type="entry name" value="Prtase_inh_Kunz-CS"/>
</dbReference>
<dbReference type="InterPro" id="IPR050098">
    <property type="entry name" value="TFPI/VKTCI-like"/>
</dbReference>
<dbReference type="PANTHER" id="PTHR10083">
    <property type="entry name" value="KUNITZ-TYPE PROTEASE INHIBITOR-RELATED"/>
    <property type="match status" value="1"/>
</dbReference>
<dbReference type="Pfam" id="PF00014">
    <property type="entry name" value="Kunitz_BPTI"/>
    <property type="match status" value="1"/>
</dbReference>
<dbReference type="PRINTS" id="PR00759">
    <property type="entry name" value="BASICPTASE"/>
</dbReference>
<dbReference type="SMART" id="SM00131">
    <property type="entry name" value="KU"/>
    <property type="match status" value="1"/>
</dbReference>
<dbReference type="SUPFAM" id="SSF57362">
    <property type="entry name" value="BPTI-like"/>
    <property type="match status" value="1"/>
</dbReference>
<dbReference type="PROSITE" id="PS00280">
    <property type="entry name" value="BPTI_KUNITZ_1"/>
    <property type="match status" value="1"/>
</dbReference>
<dbReference type="PROSITE" id="PS50279">
    <property type="entry name" value="BPTI_KUNITZ_2"/>
    <property type="match status" value="1"/>
</dbReference>
<name>VKT2_PSEAU</name>
<proteinExistence type="evidence at transcript level"/>
<comment type="function">
    <text evidence="1">Serine protease inhibitor.</text>
</comment>
<comment type="subcellular location">
    <subcellularLocation>
        <location evidence="1">Secreted</location>
    </subcellularLocation>
</comment>
<comment type="tissue specificity">
    <text>Expressed by the venom gland.</text>
</comment>
<comment type="miscellaneous">
    <text evidence="1">Negative results: does not inhibit voltage-gated potassium channels (Kv).</text>
</comment>
<comment type="similarity">
    <text evidence="4">Belongs to the venom Kunitz-type family.</text>
</comment>
<accession>Q6ITC0</accession>
<evidence type="ECO:0000250" key="1"/>
<evidence type="ECO:0000255" key="2"/>
<evidence type="ECO:0000255" key="3">
    <source>
        <dbReference type="PROSITE-ProRule" id="PRU00031"/>
    </source>
</evidence>
<evidence type="ECO:0000305" key="4"/>
<protein>
    <recommendedName>
        <fullName>Kunitz-type serine protease inhibitor mulgin-2</fullName>
    </recommendedName>
</protein>
<sequence>MSSGGLFLLLGLLTLWEVLTPVSSKDRPKFCELPPDSGSCKGSFQAFYYHPVHRTCLEFIYGGCEGNDNNFKTIDECKRTCAA</sequence>
<reference key="1">
    <citation type="submission" date="2004-05" db="EMBL/GenBank/DDBJ databases">
        <title>Mulga snake venom gland cDNA encoding mulgin-2.</title>
        <authorList>
            <person name="Filippovich I."/>
            <person name="Sorokina N.I."/>
        </authorList>
    </citation>
    <scope>NUCLEOTIDE SEQUENCE [MRNA]</scope>
    <source>
        <tissue>Venom gland</tissue>
    </source>
</reference>
<feature type="signal peptide" evidence="2">
    <location>
        <begin position="1"/>
        <end position="24"/>
    </location>
</feature>
<feature type="chain" id="PRO_0000376898" description="Kunitz-type serine protease inhibitor mulgin-2">
    <location>
        <begin position="25"/>
        <end position="83"/>
    </location>
</feature>
<feature type="domain" description="BPTI/Kunitz inhibitor" evidence="3">
    <location>
        <begin position="31"/>
        <end position="81"/>
    </location>
</feature>
<feature type="site" description="Reactive bond for trypsin" evidence="1">
    <location>
        <begin position="41"/>
        <end position="42"/>
    </location>
</feature>
<feature type="disulfide bond" evidence="3">
    <location>
        <begin position="31"/>
        <end position="81"/>
    </location>
</feature>
<feature type="disulfide bond" evidence="3">
    <location>
        <begin position="40"/>
        <end position="64"/>
    </location>
</feature>
<feature type="disulfide bond" evidence="3">
    <location>
        <begin position="56"/>
        <end position="77"/>
    </location>
</feature>